<protein>
    <recommendedName>
        <fullName evidence="1">2-isopropylmalate synthase</fullName>
        <ecNumber evidence="1">2.3.3.13</ecNumber>
    </recommendedName>
    <alternativeName>
        <fullName evidence="1">Alpha-IPM synthase</fullName>
    </alternativeName>
    <alternativeName>
        <fullName evidence="1">Alpha-isopropylmalate synthase</fullName>
    </alternativeName>
</protein>
<reference key="1">
    <citation type="journal article" date="2007" name="Proc. Natl. Acad. Sci. U.S.A.">
        <title>The genome of Syntrophus aciditrophicus: life at the thermodynamic limit of microbial growth.</title>
        <authorList>
            <person name="McInerney M.J."/>
            <person name="Rohlin L."/>
            <person name="Mouttaki H."/>
            <person name="Kim U."/>
            <person name="Krupp R.S."/>
            <person name="Rios-Hernandez L."/>
            <person name="Sieber J."/>
            <person name="Struchtemeyer C.G."/>
            <person name="Bhattacharyya A."/>
            <person name="Campbell J.W."/>
            <person name="Gunsalus R.P."/>
        </authorList>
    </citation>
    <scope>NUCLEOTIDE SEQUENCE [LARGE SCALE GENOMIC DNA]</scope>
    <source>
        <strain>SB</strain>
    </source>
</reference>
<feature type="chain" id="PRO_1000149312" description="2-isopropylmalate synthase">
    <location>
        <begin position="1"/>
        <end position="516"/>
    </location>
</feature>
<feature type="domain" description="Pyruvate carboxyltransferase" evidence="1">
    <location>
        <begin position="8"/>
        <end position="270"/>
    </location>
</feature>
<feature type="region of interest" description="Regulatory domain" evidence="1">
    <location>
        <begin position="394"/>
        <end position="516"/>
    </location>
</feature>
<feature type="binding site" evidence="1">
    <location>
        <position position="17"/>
    </location>
    <ligand>
        <name>Mn(2+)</name>
        <dbReference type="ChEBI" id="CHEBI:29035"/>
    </ligand>
</feature>
<feature type="binding site" evidence="1">
    <location>
        <position position="205"/>
    </location>
    <ligand>
        <name>Mn(2+)</name>
        <dbReference type="ChEBI" id="CHEBI:29035"/>
    </ligand>
</feature>
<feature type="binding site" evidence="1">
    <location>
        <position position="207"/>
    </location>
    <ligand>
        <name>Mn(2+)</name>
        <dbReference type="ChEBI" id="CHEBI:29035"/>
    </ligand>
</feature>
<feature type="binding site" evidence="1">
    <location>
        <position position="241"/>
    </location>
    <ligand>
        <name>Mn(2+)</name>
        <dbReference type="ChEBI" id="CHEBI:29035"/>
    </ligand>
</feature>
<sequence>MDSPEKRIYIFDTTLRDGEQSPGSSMNPAEKLRIARQLEKMGVDIIEAGFPIASEGDFLSVQQIAQEIRGAQIAGLARANNADIDRAWEAIRDAANPRIHTFISSSDIHLKYQLRKSREQVLKEAVAAVERARSYTPNVEFSPMDATRTDRGYLCEMVEAVIAAGASTVNIPDTVGYAIPQEFGELIAYLRANVPNISQAIISVHCHNDLGLAVANSLSAILNGARQVECTINGIGERAGNTAMEEVVMALRTRKDLFGFYTGIKTESIYQSSRLLTQITGVAVQPNKAIVGANAFAHESGIHQDGLIKEKITYEIMTPQSVGISDSHIVLGKHSGRHAVSEHLKKLGFNLSDTELNKIFVRFKELADAKKNVFDEDLEAIVYEELYRVEDKYKLIYLNVVSGNVAIPTATMQMEVDREIVQDAGFGVGPVDATFDAIRKITGTNYDLLRYVVNAISGGTDAQGEVTVQLKFNGRSVVGHGADLDVIVASARAYINALNRLEFLKRDAGKIKSEYE</sequence>
<accession>Q2LWJ3</accession>
<evidence type="ECO:0000255" key="1">
    <source>
        <dbReference type="HAMAP-Rule" id="MF_01025"/>
    </source>
</evidence>
<gene>
    <name evidence="1" type="primary">leuA</name>
    <name type="ordered locus">SYNAS_25700</name>
    <name type="ORF">SYN_00090</name>
</gene>
<name>LEU1_SYNAS</name>
<comment type="function">
    <text evidence="1">Catalyzes the condensation of the acetyl group of acetyl-CoA with 3-methyl-2-oxobutanoate (2-ketoisovalerate) to form 3-carboxy-3-hydroxy-4-methylpentanoate (2-isopropylmalate).</text>
</comment>
<comment type="catalytic activity">
    <reaction evidence="1">
        <text>3-methyl-2-oxobutanoate + acetyl-CoA + H2O = (2S)-2-isopropylmalate + CoA + H(+)</text>
        <dbReference type="Rhea" id="RHEA:21524"/>
        <dbReference type="ChEBI" id="CHEBI:1178"/>
        <dbReference type="ChEBI" id="CHEBI:11851"/>
        <dbReference type="ChEBI" id="CHEBI:15377"/>
        <dbReference type="ChEBI" id="CHEBI:15378"/>
        <dbReference type="ChEBI" id="CHEBI:57287"/>
        <dbReference type="ChEBI" id="CHEBI:57288"/>
        <dbReference type="EC" id="2.3.3.13"/>
    </reaction>
</comment>
<comment type="cofactor">
    <cofactor evidence="1">
        <name>Mn(2+)</name>
        <dbReference type="ChEBI" id="CHEBI:29035"/>
    </cofactor>
</comment>
<comment type="pathway">
    <text evidence="1">Amino-acid biosynthesis; L-leucine biosynthesis; L-leucine from 3-methyl-2-oxobutanoate: step 1/4.</text>
</comment>
<comment type="subunit">
    <text evidence="1">Homodimer.</text>
</comment>
<comment type="subcellular location">
    <subcellularLocation>
        <location evidence="1">Cytoplasm</location>
    </subcellularLocation>
</comment>
<comment type="similarity">
    <text evidence="1">Belongs to the alpha-IPM synthase/homocitrate synthase family. LeuA type 1 subfamily.</text>
</comment>
<keyword id="KW-0028">Amino-acid biosynthesis</keyword>
<keyword id="KW-0100">Branched-chain amino acid biosynthesis</keyword>
<keyword id="KW-0963">Cytoplasm</keyword>
<keyword id="KW-0432">Leucine biosynthesis</keyword>
<keyword id="KW-0464">Manganese</keyword>
<keyword id="KW-0479">Metal-binding</keyword>
<keyword id="KW-1185">Reference proteome</keyword>
<keyword id="KW-0808">Transferase</keyword>
<dbReference type="EC" id="2.3.3.13" evidence="1"/>
<dbReference type="EMBL" id="CP000252">
    <property type="protein sequence ID" value="ABC78449.1"/>
    <property type="molecule type" value="Genomic_DNA"/>
</dbReference>
<dbReference type="RefSeq" id="WP_011418468.1">
    <property type="nucleotide sequence ID" value="NC_007759.1"/>
</dbReference>
<dbReference type="SMR" id="Q2LWJ3"/>
<dbReference type="FunCoup" id="Q2LWJ3">
    <property type="interactions" value="432"/>
</dbReference>
<dbReference type="STRING" id="56780.SYN_00090"/>
<dbReference type="KEGG" id="sat:SYN_00090"/>
<dbReference type="eggNOG" id="COG0119">
    <property type="taxonomic scope" value="Bacteria"/>
</dbReference>
<dbReference type="HOGENOM" id="CLU_022158_0_1_7"/>
<dbReference type="InParanoid" id="Q2LWJ3"/>
<dbReference type="OrthoDB" id="9803573at2"/>
<dbReference type="UniPathway" id="UPA00048">
    <property type="reaction ID" value="UER00070"/>
</dbReference>
<dbReference type="Proteomes" id="UP000001933">
    <property type="component" value="Chromosome"/>
</dbReference>
<dbReference type="GO" id="GO:0005737">
    <property type="term" value="C:cytoplasm"/>
    <property type="evidence" value="ECO:0007669"/>
    <property type="project" value="UniProtKB-SubCell"/>
</dbReference>
<dbReference type="GO" id="GO:0003852">
    <property type="term" value="F:2-isopropylmalate synthase activity"/>
    <property type="evidence" value="ECO:0007669"/>
    <property type="project" value="UniProtKB-UniRule"/>
</dbReference>
<dbReference type="GO" id="GO:0003985">
    <property type="term" value="F:acetyl-CoA C-acetyltransferase activity"/>
    <property type="evidence" value="ECO:0007669"/>
    <property type="project" value="UniProtKB-UniRule"/>
</dbReference>
<dbReference type="GO" id="GO:0030145">
    <property type="term" value="F:manganese ion binding"/>
    <property type="evidence" value="ECO:0007669"/>
    <property type="project" value="UniProtKB-UniRule"/>
</dbReference>
<dbReference type="GO" id="GO:0009098">
    <property type="term" value="P:L-leucine biosynthetic process"/>
    <property type="evidence" value="ECO:0007669"/>
    <property type="project" value="UniProtKB-UniRule"/>
</dbReference>
<dbReference type="CDD" id="cd07940">
    <property type="entry name" value="DRE_TIM_IPMS"/>
    <property type="match status" value="1"/>
</dbReference>
<dbReference type="FunFam" id="1.10.238.260:FF:000001">
    <property type="entry name" value="2-isopropylmalate synthase"/>
    <property type="match status" value="1"/>
</dbReference>
<dbReference type="FunFam" id="3.20.20.70:FF:000010">
    <property type="entry name" value="2-isopropylmalate synthase"/>
    <property type="match status" value="1"/>
</dbReference>
<dbReference type="FunFam" id="3.30.160.270:FF:000003">
    <property type="entry name" value="2-isopropylmalate synthase"/>
    <property type="match status" value="1"/>
</dbReference>
<dbReference type="Gene3D" id="1.10.238.260">
    <property type="match status" value="1"/>
</dbReference>
<dbReference type="Gene3D" id="3.30.160.270">
    <property type="match status" value="1"/>
</dbReference>
<dbReference type="Gene3D" id="3.20.20.70">
    <property type="entry name" value="Aldolase class I"/>
    <property type="match status" value="1"/>
</dbReference>
<dbReference type="HAMAP" id="MF_01025">
    <property type="entry name" value="LeuA_type1"/>
    <property type="match status" value="1"/>
</dbReference>
<dbReference type="InterPro" id="IPR050073">
    <property type="entry name" value="2-IPM_HCS-like"/>
</dbReference>
<dbReference type="InterPro" id="IPR013709">
    <property type="entry name" value="2-isopropylmalate_synth_dimer"/>
</dbReference>
<dbReference type="InterPro" id="IPR002034">
    <property type="entry name" value="AIPM/Hcit_synth_CS"/>
</dbReference>
<dbReference type="InterPro" id="IPR013785">
    <property type="entry name" value="Aldolase_TIM"/>
</dbReference>
<dbReference type="InterPro" id="IPR054691">
    <property type="entry name" value="LeuA/HCS_post-cat"/>
</dbReference>
<dbReference type="InterPro" id="IPR036230">
    <property type="entry name" value="LeuA_allosteric_dom_sf"/>
</dbReference>
<dbReference type="InterPro" id="IPR005671">
    <property type="entry name" value="LeuA_bact_synth"/>
</dbReference>
<dbReference type="InterPro" id="IPR000891">
    <property type="entry name" value="PYR_CT"/>
</dbReference>
<dbReference type="NCBIfam" id="TIGR00973">
    <property type="entry name" value="leuA_bact"/>
    <property type="match status" value="1"/>
</dbReference>
<dbReference type="NCBIfam" id="NF002085">
    <property type="entry name" value="PRK00915.1-2"/>
    <property type="match status" value="1"/>
</dbReference>
<dbReference type="NCBIfam" id="NF002086">
    <property type="entry name" value="PRK00915.1-3"/>
    <property type="match status" value="1"/>
</dbReference>
<dbReference type="NCBIfam" id="NF002087">
    <property type="entry name" value="PRK00915.1-4"/>
    <property type="match status" value="1"/>
</dbReference>
<dbReference type="PANTHER" id="PTHR10277:SF9">
    <property type="entry name" value="2-ISOPROPYLMALATE SYNTHASE 1, CHLOROPLASTIC-RELATED"/>
    <property type="match status" value="1"/>
</dbReference>
<dbReference type="PANTHER" id="PTHR10277">
    <property type="entry name" value="HOMOCITRATE SYNTHASE-RELATED"/>
    <property type="match status" value="1"/>
</dbReference>
<dbReference type="Pfam" id="PF22617">
    <property type="entry name" value="HCS_D2"/>
    <property type="match status" value="1"/>
</dbReference>
<dbReference type="Pfam" id="PF00682">
    <property type="entry name" value="HMGL-like"/>
    <property type="match status" value="1"/>
</dbReference>
<dbReference type="Pfam" id="PF08502">
    <property type="entry name" value="LeuA_dimer"/>
    <property type="match status" value="1"/>
</dbReference>
<dbReference type="SMART" id="SM00917">
    <property type="entry name" value="LeuA_dimer"/>
    <property type="match status" value="1"/>
</dbReference>
<dbReference type="SUPFAM" id="SSF110921">
    <property type="entry name" value="2-isopropylmalate synthase LeuA, allosteric (dimerisation) domain"/>
    <property type="match status" value="1"/>
</dbReference>
<dbReference type="SUPFAM" id="SSF51569">
    <property type="entry name" value="Aldolase"/>
    <property type="match status" value="1"/>
</dbReference>
<dbReference type="PROSITE" id="PS00815">
    <property type="entry name" value="AIPM_HOMOCIT_SYNTH_1"/>
    <property type="match status" value="1"/>
</dbReference>
<dbReference type="PROSITE" id="PS00816">
    <property type="entry name" value="AIPM_HOMOCIT_SYNTH_2"/>
    <property type="match status" value="1"/>
</dbReference>
<dbReference type="PROSITE" id="PS50991">
    <property type="entry name" value="PYR_CT"/>
    <property type="match status" value="1"/>
</dbReference>
<organism>
    <name type="scientific">Syntrophus aciditrophicus (strain SB)</name>
    <dbReference type="NCBI Taxonomy" id="56780"/>
    <lineage>
        <taxon>Bacteria</taxon>
        <taxon>Pseudomonadati</taxon>
        <taxon>Thermodesulfobacteriota</taxon>
        <taxon>Syntrophia</taxon>
        <taxon>Syntrophales</taxon>
        <taxon>Syntrophaceae</taxon>
        <taxon>Syntrophus</taxon>
    </lineage>
</organism>
<proteinExistence type="inferred from homology"/>